<name>NANQ_ECOLI</name>
<evidence type="ECO:0000269" key="1">
    <source>
    </source>
</evidence>
<evidence type="ECO:0000269" key="2">
    <source>
    </source>
</evidence>
<evidence type="ECO:0000303" key="3">
    <source>
    </source>
</evidence>
<evidence type="ECO:0000305" key="4"/>
<evidence type="ECO:0000305" key="5">
    <source>
    </source>
</evidence>
<comment type="function">
    <text evidence="2">Opens both the alpha- and beta-forms of N-acetylneuraminate (sialic acid; Neu5Ac) to provide aceneuramate, the preferred substrate for NanA. Has preferential activity on the beta-anomer rather than the alpha-anomer. Accelerates a reaction that is spontaneous at slightly alkaline pH, facilitates the reaction at acidic pH.</text>
</comment>
<comment type="catalytic activity">
    <reaction evidence="2">
        <text>N-acetyl-alpha-neuraminate = aceneuramate</text>
        <dbReference type="Rhea" id="RHEA:67736"/>
        <dbReference type="ChEBI" id="CHEBI:58770"/>
        <dbReference type="ChEBI" id="CHEBI:173083"/>
    </reaction>
    <physiologicalReaction direction="left-to-right" evidence="2">
        <dbReference type="Rhea" id="RHEA:67737"/>
    </physiologicalReaction>
    <physiologicalReaction direction="right-to-left" evidence="2">
        <dbReference type="Rhea" id="RHEA:67738"/>
    </physiologicalReaction>
</comment>
<comment type="catalytic activity">
    <reaction evidence="2">
        <text>N-acetyl-beta-neuraminate = aceneuramate</text>
        <dbReference type="Rhea" id="RHEA:67740"/>
        <dbReference type="ChEBI" id="CHEBI:58705"/>
        <dbReference type="ChEBI" id="CHEBI:173083"/>
    </reaction>
    <physiologicalReaction direction="left-to-right" evidence="2">
        <dbReference type="Rhea" id="RHEA:67741"/>
    </physiologicalReaction>
    <physiologicalReaction direction="right-to-left" evidence="2">
        <dbReference type="Rhea" id="RHEA:67742"/>
    </physiologicalReaction>
</comment>
<comment type="cofactor">
    <cofactor evidence="2">
        <name>Zn(2+)</name>
        <dbReference type="ChEBI" id="CHEBI:29105"/>
    </cofactor>
    <text evidence="5">The Zn(2+) ion may play a catalytic role.</text>
</comment>
<comment type="activity regulation">
    <text evidence="2">Inhibited by 1,10-phenanthroline.</text>
</comment>
<comment type="subcellular location">
    <subcellularLocation>
        <location evidence="5">Cytoplasm</location>
    </subcellularLocation>
</comment>
<comment type="induction">
    <text evidence="1">Negatively regulated by the transcriptional repressor NanR. Induced by N-acetylneuraminate, via inactivation of NanR.</text>
</comment>
<comment type="domain">
    <text evidence="2">A His-tag on the N-terminus blocks activity, while a C-terminal His-tag does not.</text>
</comment>
<comment type="disruption phenotype">
    <text evidence="2">No visible effect on growth on Neu5Ac at pH 7.0 and 37 degrees Celsius. Shows slight systematic growth delay at pH 6.0 and 20 degrees Celsius. No visible phenotype on glucose.</text>
</comment>
<comment type="similarity">
    <text evidence="4">Belongs to the NanQ anomerase family.</text>
</comment>
<accession>P45424</accession>
<accession>Q2M8Z2</accession>
<organism>
    <name type="scientific">Escherichia coli (strain K12)</name>
    <dbReference type="NCBI Taxonomy" id="83333"/>
    <lineage>
        <taxon>Bacteria</taxon>
        <taxon>Pseudomonadati</taxon>
        <taxon>Pseudomonadota</taxon>
        <taxon>Gammaproteobacteria</taxon>
        <taxon>Enterobacterales</taxon>
        <taxon>Enterobacteriaceae</taxon>
        <taxon>Escherichia</taxon>
    </lineage>
</organism>
<sequence>MMMGEVQSLPSAGLHPALQDALTLALAARPQEKAPGRYELQGDNIFMNVMTFNTQSPVEKKAELHEQYIDIQLLLNGEERILFGMAGTARQCEEFHHEDDYQLCSTIDNEQAIILKPGMFAVFMPGEPHKPGCVVGEPGEIKKVVVKVKADLMA</sequence>
<feature type="chain" id="PRO_0000169485" description="N-acetylneuraminate anomerase NanQ">
    <location>
        <begin position="1"/>
        <end position="154"/>
    </location>
</feature>
<reference key="1">
    <citation type="journal article" date="1997" name="Science">
        <title>The complete genome sequence of Escherichia coli K-12.</title>
        <authorList>
            <person name="Blattner F.R."/>
            <person name="Plunkett G. III"/>
            <person name="Bloch C.A."/>
            <person name="Perna N.T."/>
            <person name="Burland V."/>
            <person name="Riley M."/>
            <person name="Collado-Vides J."/>
            <person name="Glasner J.D."/>
            <person name="Rode C.K."/>
            <person name="Mayhew G.F."/>
            <person name="Gregor J."/>
            <person name="Davis N.W."/>
            <person name="Kirkpatrick H.A."/>
            <person name="Goeden M.A."/>
            <person name="Rose D.J."/>
            <person name="Mau B."/>
            <person name="Shao Y."/>
        </authorList>
    </citation>
    <scope>NUCLEOTIDE SEQUENCE [LARGE SCALE GENOMIC DNA]</scope>
    <source>
        <strain>K12 / MG1655 / ATCC 47076</strain>
    </source>
</reference>
<reference key="2">
    <citation type="journal article" date="2006" name="Mol. Syst. Biol.">
        <title>Highly accurate genome sequences of Escherichia coli K-12 strains MG1655 and W3110.</title>
        <authorList>
            <person name="Hayashi K."/>
            <person name="Morooka N."/>
            <person name="Yamamoto Y."/>
            <person name="Fujita K."/>
            <person name="Isono K."/>
            <person name="Choi S."/>
            <person name="Ohtsubo E."/>
            <person name="Baba T."/>
            <person name="Wanner B.L."/>
            <person name="Mori H."/>
            <person name="Horiuchi T."/>
        </authorList>
    </citation>
    <scope>NUCLEOTIDE SEQUENCE [LARGE SCALE GENOMIC DNA]</scope>
    <source>
        <strain>K12 / W3110 / ATCC 27325 / DSM 5911</strain>
    </source>
</reference>
<reference key="3">
    <citation type="journal article" date="2013" name="J. Bacteriol.">
        <title>Control of the Escherichia coli sialoregulon by transcriptional repressor NanR.</title>
        <authorList>
            <person name="Kalivoda K.A."/>
            <person name="Steenbergen S.M."/>
            <person name="Vimr E.R."/>
        </authorList>
    </citation>
    <scope>INDUCTION</scope>
</reference>
<reference key="4">
    <citation type="journal article" date="2021" name="J. Biol. Chem.">
        <title>The metalloprotein YhcH is an anomerase providing N-acetylneuraminate aldolase with the open form of its substrate.</title>
        <authorList>
            <person name="Kentache T."/>
            <person name="Thabault L."/>
            <person name="Deumer G."/>
            <person name="Haufroid V."/>
            <person name="Frederick R."/>
            <person name="Linster C.L."/>
            <person name="Peracchi A."/>
            <person name="Veiga-da-Cunha M."/>
            <person name="Bommer G.T."/>
            <person name="Van Schaftingen E."/>
        </authorList>
    </citation>
    <scope>FUNCTION</scope>
    <scope>CATALYTIC ACTIVITY</scope>
    <scope>COFACTOR</scope>
    <scope>ACTIVITY REGULATION</scope>
    <scope>SUBCELLULAR LOCATION</scope>
    <scope>DOMAIN</scope>
    <scope>DISRUPTION PHENOTYPE</scope>
    <source>
        <strain>K12</strain>
    </source>
</reference>
<protein>
    <recommendedName>
        <fullName evidence="3">N-acetylneuraminate anomerase NanQ</fullName>
    </recommendedName>
    <alternativeName>
        <fullName evidence="3">N-acetylneuraminate openase</fullName>
    </alternativeName>
</protein>
<keyword id="KW-0963">Cytoplasm</keyword>
<keyword id="KW-1185">Reference proteome</keyword>
<keyword id="KW-0862">Zinc</keyword>
<dbReference type="EMBL" id="U18997">
    <property type="protein sequence ID" value="AAA58023.1"/>
    <property type="molecule type" value="Genomic_DNA"/>
</dbReference>
<dbReference type="EMBL" id="U00096">
    <property type="protein sequence ID" value="AAC76253.1"/>
    <property type="molecule type" value="Genomic_DNA"/>
</dbReference>
<dbReference type="EMBL" id="AP009048">
    <property type="protein sequence ID" value="BAE77264.1"/>
    <property type="molecule type" value="Genomic_DNA"/>
</dbReference>
<dbReference type="PIR" id="G65113">
    <property type="entry name" value="G65113"/>
</dbReference>
<dbReference type="RefSeq" id="NP_417688.1">
    <property type="nucleotide sequence ID" value="NC_000913.3"/>
</dbReference>
<dbReference type="RefSeq" id="WP_000979882.1">
    <property type="nucleotide sequence ID" value="NZ_STEB01000012.1"/>
</dbReference>
<dbReference type="SMR" id="P45424"/>
<dbReference type="BioGRID" id="4261226">
    <property type="interactions" value="18"/>
</dbReference>
<dbReference type="FunCoup" id="P45424">
    <property type="interactions" value="48"/>
</dbReference>
<dbReference type="IntAct" id="P45424">
    <property type="interactions" value="1"/>
</dbReference>
<dbReference type="STRING" id="511145.b3221"/>
<dbReference type="jPOST" id="P45424"/>
<dbReference type="PaxDb" id="511145-b3221"/>
<dbReference type="EnsemblBacteria" id="AAC76253">
    <property type="protein sequence ID" value="AAC76253"/>
    <property type="gene ID" value="b3221"/>
</dbReference>
<dbReference type="GeneID" id="75206071"/>
<dbReference type="GeneID" id="947750"/>
<dbReference type="KEGG" id="ecj:JW3190"/>
<dbReference type="KEGG" id="eco:b3221"/>
<dbReference type="KEGG" id="ecoc:C3026_17525"/>
<dbReference type="PATRIC" id="fig|511145.12.peg.3317"/>
<dbReference type="EchoBASE" id="EB2665"/>
<dbReference type="eggNOG" id="COG2731">
    <property type="taxonomic scope" value="Bacteria"/>
</dbReference>
<dbReference type="HOGENOM" id="CLU_107139_3_1_6"/>
<dbReference type="InParanoid" id="P45424"/>
<dbReference type="OMA" id="PPWESHL"/>
<dbReference type="OrthoDB" id="6196468at2"/>
<dbReference type="PhylomeDB" id="P45424"/>
<dbReference type="BioCyc" id="EcoCyc:G7675-MONOMER"/>
<dbReference type="BioCyc" id="MetaCyc:G7675-MONOMER"/>
<dbReference type="PRO" id="PR:P45424"/>
<dbReference type="Proteomes" id="UP000000625">
    <property type="component" value="Chromosome"/>
</dbReference>
<dbReference type="GO" id="GO:0005829">
    <property type="term" value="C:cytosol"/>
    <property type="evidence" value="ECO:0000318"/>
    <property type="project" value="GO_Central"/>
</dbReference>
<dbReference type="GO" id="GO:0016857">
    <property type="term" value="F:racemase and epimerase activity, acting on carbohydrates and derivatives"/>
    <property type="evidence" value="ECO:0000314"/>
    <property type="project" value="EcoCyc"/>
</dbReference>
<dbReference type="GO" id="GO:0008270">
    <property type="term" value="F:zinc ion binding"/>
    <property type="evidence" value="ECO:0000314"/>
    <property type="project" value="EcoCyc"/>
</dbReference>
<dbReference type="GO" id="GO:0006974">
    <property type="term" value="P:DNA damage response"/>
    <property type="evidence" value="ECO:0000270"/>
    <property type="project" value="EcoliWiki"/>
</dbReference>
<dbReference type="GO" id="GO:0019262">
    <property type="term" value="P:N-acetylneuraminate catabolic process"/>
    <property type="evidence" value="ECO:0000315"/>
    <property type="project" value="EcoCyc"/>
</dbReference>
<dbReference type="FunFam" id="2.60.120.370:FF:000001">
    <property type="entry name" value="YhcH/YjgK/YiaL family protein"/>
    <property type="match status" value="1"/>
</dbReference>
<dbReference type="Gene3D" id="2.60.120.370">
    <property type="entry name" value="YhcH/YjgK/YiaL"/>
    <property type="match status" value="1"/>
</dbReference>
<dbReference type="InterPro" id="IPR049827">
    <property type="entry name" value="NanQ"/>
</dbReference>
<dbReference type="InterPro" id="IPR004375">
    <property type="entry name" value="NanQ/TabA/YiaL"/>
</dbReference>
<dbReference type="InterPro" id="IPR037012">
    <property type="entry name" value="NanQ/TabA/YiaL_sf"/>
</dbReference>
<dbReference type="NCBIfam" id="NF040884">
    <property type="entry name" value="acetylneur_anom"/>
    <property type="match status" value="1"/>
</dbReference>
<dbReference type="NCBIfam" id="TIGR00022">
    <property type="entry name" value="YhcH/YjgK/YiaL family protein"/>
    <property type="match status" value="1"/>
</dbReference>
<dbReference type="PANTHER" id="PTHR34986">
    <property type="entry name" value="EVOLVED BETA-GALACTOSIDASE SUBUNIT BETA"/>
    <property type="match status" value="1"/>
</dbReference>
<dbReference type="PANTHER" id="PTHR34986:SF5">
    <property type="entry name" value="N-ACETYLNEURAMINATE ANOMERASE NANQ"/>
    <property type="match status" value="1"/>
</dbReference>
<dbReference type="Pfam" id="PF04074">
    <property type="entry name" value="DUF386"/>
    <property type="match status" value="1"/>
</dbReference>
<dbReference type="SUPFAM" id="SSF51197">
    <property type="entry name" value="Clavaminate synthase-like"/>
    <property type="match status" value="1"/>
</dbReference>
<proteinExistence type="evidence at protein level"/>
<gene>
    <name evidence="3" type="primary">nanQ</name>
    <name type="synonym">yhcH</name>
    <name type="ordered locus">b3221</name>
    <name type="ordered locus">JW3190</name>
</gene>